<organism>
    <name type="scientific">Haemophilus influenzae (strain PittEE)</name>
    <dbReference type="NCBI Taxonomy" id="374930"/>
    <lineage>
        <taxon>Bacteria</taxon>
        <taxon>Pseudomonadati</taxon>
        <taxon>Pseudomonadota</taxon>
        <taxon>Gammaproteobacteria</taxon>
        <taxon>Pasteurellales</taxon>
        <taxon>Pasteurellaceae</taxon>
        <taxon>Haemophilus</taxon>
    </lineage>
</organism>
<keyword id="KW-0963">Cytoplasm</keyword>
<keyword id="KW-0489">Methyltransferase</keyword>
<keyword id="KW-0698">rRNA processing</keyword>
<keyword id="KW-0949">S-adenosyl-L-methionine</keyword>
<keyword id="KW-0808">Transferase</keyword>
<dbReference type="EC" id="2.1.1.172" evidence="1"/>
<dbReference type="EMBL" id="CP000671">
    <property type="protein sequence ID" value="ABQ98076.1"/>
    <property type="molecule type" value="Genomic_DNA"/>
</dbReference>
<dbReference type="SMR" id="A5UBC5"/>
<dbReference type="KEGG" id="hip:CGSHiEE_03255"/>
<dbReference type="HOGENOM" id="CLU_049581_0_1_6"/>
<dbReference type="GO" id="GO:0005737">
    <property type="term" value="C:cytoplasm"/>
    <property type="evidence" value="ECO:0007669"/>
    <property type="project" value="UniProtKB-SubCell"/>
</dbReference>
<dbReference type="GO" id="GO:0052914">
    <property type="term" value="F:16S rRNA (guanine(1207)-N(2))-methyltransferase activity"/>
    <property type="evidence" value="ECO:0007669"/>
    <property type="project" value="UniProtKB-EC"/>
</dbReference>
<dbReference type="GO" id="GO:0003676">
    <property type="term" value="F:nucleic acid binding"/>
    <property type="evidence" value="ECO:0007669"/>
    <property type="project" value="InterPro"/>
</dbReference>
<dbReference type="CDD" id="cd02440">
    <property type="entry name" value="AdoMet_MTases"/>
    <property type="match status" value="1"/>
</dbReference>
<dbReference type="Gene3D" id="3.40.50.150">
    <property type="entry name" value="Vaccinia Virus protein VP39"/>
    <property type="match status" value="2"/>
</dbReference>
<dbReference type="HAMAP" id="MF_01862">
    <property type="entry name" value="16SrRNA_methyltr_C"/>
    <property type="match status" value="1"/>
</dbReference>
<dbReference type="InterPro" id="IPR002052">
    <property type="entry name" value="DNA_methylase_N6_adenine_CS"/>
</dbReference>
<dbReference type="InterPro" id="IPR013675">
    <property type="entry name" value="Mtase_sm_N"/>
</dbReference>
<dbReference type="InterPro" id="IPR023543">
    <property type="entry name" value="rRNA_ssu_MeTfrase_C"/>
</dbReference>
<dbReference type="InterPro" id="IPR046977">
    <property type="entry name" value="RsmC/RlmG"/>
</dbReference>
<dbReference type="InterPro" id="IPR029063">
    <property type="entry name" value="SAM-dependent_MTases_sf"/>
</dbReference>
<dbReference type="InterPro" id="IPR007848">
    <property type="entry name" value="Small_mtfrase_dom"/>
</dbReference>
<dbReference type="NCBIfam" id="NF007023">
    <property type="entry name" value="PRK09489.1"/>
    <property type="match status" value="1"/>
</dbReference>
<dbReference type="PANTHER" id="PTHR47816">
    <property type="entry name" value="RIBOSOMAL RNA SMALL SUBUNIT METHYLTRANSFERASE C"/>
    <property type="match status" value="1"/>
</dbReference>
<dbReference type="PANTHER" id="PTHR47816:SF4">
    <property type="entry name" value="RIBOSOMAL RNA SMALL SUBUNIT METHYLTRANSFERASE C"/>
    <property type="match status" value="1"/>
</dbReference>
<dbReference type="Pfam" id="PF05175">
    <property type="entry name" value="MTS"/>
    <property type="match status" value="1"/>
</dbReference>
<dbReference type="Pfam" id="PF08468">
    <property type="entry name" value="MTS_N"/>
    <property type="match status" value="1"/>
</dbReference>
<dbReference type="SUPFAM" id="SSF53335">
    <property type="entry name" value="S-adenosyl-L-methionine-dependent methyltransferases"/>
    <property type="match status" value="1"/>
</dbReference>
<comment type="function">
    <text evidence="1">Specifically methylates the guanine in position 1207 of 16S rRNA in the 30S particle.</text>
</comment>
<comment type="catalytic activity">
    <reaction evidence="1">
        <text>guanosine(1207) in 16S rRNA + S-adenosyl-L-methionine = N(2)-methylguanosine(1207) in 16S rRNA + S-adenosyl-L-homocysteine + H(+)</text>
        <dbReference type="Rhea" id="RHEA:42736"/>
        <dbReference type="Rhea" id="RHEA-COMP:10213"/>
        <dbReference type="Rhea" id="RHEA-COMP:10214"/>
        <dbReference type="ChEBI" id="CHEBI:15378"/>
        <dbReference type="ChEBI" id="CHEBI:57856"/>
        <dbReference type="ChEBI" id="CHEBI:59789"/>
        <dbReference type="ChEBI" id="CHEBI:74269"/>
        <dbReference type="ChEBI" id="CHEBI:74481"/>
        <dbReference type="EC" id="2.1.1.172"/>
    </reaction>
</comment>
<comment type="subunit">
    <text evidence="1">Monomer.</text>
</comment>
<comment type="subcellular location">
    <subcellularLocation>
        <location evidence="1">Cytoplasm</location>
    </subcellularLocation>
</comment>
<comment type="similarity">
    <text evidence="1">Belongs to the methyltransferase superfamily. RsmC family.</text>
</comment>
<evidence type="ECO:0000255" key="1">
    <source>
        <dbReference type="HAMAP-Rule" id="MF_01862"/>
    </source>
</evidence>
<accession>A5UBC5</accession>
<feature type="chain" id="PRO_0000369719" description="Ribosomal RNA small subunit methyltransferase C">
    <location>
        <begin position="1"/>
        <end position="330"/>
    </location>
</feature>
<proteinExistence type="inferred from homology"/>
<gene>
    <name evidence="1" type="primary">rsmC</name>
    <name type="ordered locus">CGSHiEE_03255</name>
</gene>
<reference key="1">
    <citation type="journal article" date="2007" name="Genome Biol.">
        <title>Characterization and modeling of the Haemophilus influenzae core and supragenomes based on the complete genomic sequences of Rd and 12 clinical nontypeable strains.</title>
        <authorList>
            <person name="Hogg J.S."/>
            <person name="Hu F.Z."/>
            <person name="Janto B."/>
            <person name="Boissy R."/>
            <person name="Hayes J."/>
            <person name="Keefe R."/>
            <person name="Post J.C."/>
            <person name="Ehrlich G.D."/>
        </authorList>
    </citation>
    <scope>NUCLEOTIDE SEQUENCE [LARGE SCALE GENOMIC DNA]</scope>
    <source>
        <strain>PittEE</strain>
    </source>
</reference>
<sequence length="330" mass="37125">MISLESQVLERHLSFFDGKSVLFAGGISDNFPQTLASKCPSIQIWSCHFDYARTQSAVNFSVEFQGQADLIVYYWTKNKQEVNFQLLQLLAQAPIGQEILIIGENRCGVRSVEKTLAPYGEIAKIDSARRCGLYHFSLQNKPHFELKNFWKTYQHSTLENLTIYSLPGVFSAAELDTGTELLLSTIDNKIKGKVLDLGCGAGVIGSMIKKRVPNAQITMTDIHAMALESARKTLSENQLQGKVYASDVFSDIEGKFDLIISNPPFHDGIDTAYRAVTELITQAKWHLNQYGELRIVANAFLPYPELLRQHFNDYQVLAQTGKFKVYSVKN</sequence>
<name>RSMC_HAEIE</name>
<protein>
    <recommendedName>
        <fullName evidence="1">Ribosomal RNA small subunit methyltransferase C</fullName>
        <ecNumber evidence="1">2.1.1.172</ecNumber>
    </recommendedName>
    <alternativeName>
        <fullName evidence="1">16S rRNA m2G1207 methyltransferase</fullName>
    </alternativeName>
    <alternativeName>
        <fullName evidence="1">rRNA (guanine-N(2)-)-methyltransferase RsmC</fullName>
    </alternativeName>
</protein>